<sequence length="678" mass="75489">MTKNLLVELGLEELPAYVVTPSEKQLGEKMAAFLKENRLSFEAIQTFSTPRRLAVRVTGLSDKQSDLTEDFKGPAKKIALDSDGNFTKAAQGFVRGKGLTVEDIEFREIKGEEYVYVTKEEVGQAVEAIVPGVVDVLKSLTFPVSMHWAGNSFEYIRPVHTLTVLLDEQEFDLDFLDIKGSRVSRGHRFLGKETKIQSALSYEEDLRKQFVIADPCEREQMIVDQIKEIEAKHGVRIEIDADLLNEVLNLVEYPTAFMGSFDAKYLEVPEEVLVTSMKEHQRYFVVRDQDGKLLPNFISVRNGNAERLKNVIKGNEKVLVARLEDGEFFWREDQKLVISDLVEKLNNVTFHEKIGSLREHMIRTGQITVLLAEKAGLSVDETVDLARAAAIYKFDLLTGMVGEFDELQGIMGEKYTLLAGETPAVAAAIREHYMPTSAEGELPESKVGAVLAIADKLDTILSFFSVGLIPSGSNDPYALRRATQGVVRILDAFGWHIAMDELIDSLYALKFDSLTYENKAEVMDFIKARVDKMMGSTPKDIKEAVLAGSNFVVADMLEAASALVEVSKEEYFKPSVESLSRAFNLAEKAEGVATVDSALFENDQEKALAEAVETLVLSGPASQQLKQLFALSPVIDAFFENTMVMAEDQAVRQNRLAILSQLTKKAAKFACFNQINTK</sequence>
<name>SYGB_STRZP</name>
<keyword id="KW-0030">Aminoacyl-tRNA synthetase</keyword>
<keyword id="KW-0067">ATP-binding</keyword>
<keyword id="KW-0963">Cytoplasm</keyword>
<keyword id="KW-0436">Ligase</keyword>
<keyword id="KW-0547">Nucleotide-binding</keyword>
<keyword id="KW-0648">Protein biosynthesis</keyword>
<organism>
    <name type="scientific">Streptococcus pneumoniae (strain P1031)</name>
    <dbReference type="NCBI Taxonomy" id="488223"/>
    <lineage>
        <taxon>Bacteria</taxon>
        <taxon>Bacillati</taxon>
        <taxon>Bacillota</taxon>
        <taxon>Bacilli</taxon>
        <taxon>Lactobacillales</taxon>
        <taxon>Streptococcaceae</taxon>
        <taxon>Streptococcus</taxon>
    </lineage>
</organism>
<feature type="chain" id="PRO_1000197221" description="Glycine--tRNA ligase beta subunit">
    <location>
        <begin position="1"/>
        <end position="678"/>
    </location>
</feature>
<accession>C1CLH4</accession>
<evidence type="ECO:0000255" key="1">
    <source>
        <dbReference type="HAMAP-Rule" id="MF_00255"/>
    </source>
</evidence>
<reference key="1">
    <citation type="journal article" date="2010" name="Genome Biol.">
        <title>Structure and dynamics of the pan-genome of Streptococcus pneumoniae and closely related species.</title>
        <authorList>
            <person name="Donati C."/>
            <person name="Hiller N.L."/>
            <person name="Tettelin H."/>
            <person name="Muzzi A."/>
            <person name="Croucher N.J."/>
            <person name="Angiuoli S.V."/>
            <person name="Oggioni M."/>
            <person name="Dunning Hotopp J.C."/>
            <person name="Hu F.Z."/>
            <person name="Riley D.R."/>
            <person name="Covacci A."/>
            <person name="Mitchell T.J."/>
            <person name="Bentley S.D."/>
            <person name="Kilian M."/>
            <person name="Ehrlich G.D."/>
            <person name="Rappuoli R."/>
            <person name="Moxon E.R."/>
            <person name="Masignani V."/>
        </authorList>
    </citation>
    <scope>NUCLEOTIDE SEQUENCE [LARGE SCALE GENOMIC DNA]</scope>
    <source>
        <strain>P1031</strain>
    </source>
</reference>
<dbReference type="EC" id="6.1.1.14" evidence="1"/>
<dbReference type="EMBL" id="CP000920">
    <property type="protein sequence ID" value="ACO20431.1"/>
    <property type="molecule type" value="Genomic_DNA"/>
</dbReference>
<dbReference type="RefSeq" id="WP_000164760.1">
    <property type="nucleotide sequence ID" value="NC_012467.1"/>
</dbReference>
<dbReference type="SMR" id="C1CLH4"/>
<dbReference type="KEGG" id="spp:SPP_1495"/>
<dbReference type="HOGENOM" id="CLU_007220_2_2_9"/>
<dbReference type="GO" id="GO:0005829">
    <property type="term" value="C:cytosol"/>
    <property type="evidence" value="ECO:0007669"/>
    <property type="project" value="TreeGrafter"/>
</dbReference>
<dbReference type="GO" id="GO:0004814">
    <property type="term" value="F:arginine-tRNA ligase activity"/>
    <property type="evidence" value="ECO:0007669"/>
    <property type="project" value="InterPro"/>
</dbReference>
<dbReference type="GO" id="GO:0005524">
    <property type="term" value="F:ATP binding"/>
    <property type="evidence" value="ECO:0007669"/>
    <property type="project" value="UniProtKB-UniRule"/>
</dbReference>
<dbReference type="GO" id="GO:0004820">
    <property type="term" value="F:glycine-tRNA ligase activity"/>
    <property type="evidence" value="ECO:0007669"/>
    <property type="project" value="UniProtKB-UniRule"/>
</dbReference>
<dbReference type="GO" id="GO:0006420">
    <property type="term" value="P:arginyl-tRNA aminoacylation"/>
    <property type="evidence" value="ECO:0007669"/>
    <property type="project" value="InterPro"/>
</dbReference>
<dbReference type="GO" id="GO:0006426">
    <property type="term" value="P:glycyl-tRNA aminoacylation"/>
    <property type="evidence" value="ECO:0007669"/>
    <property type="project" value="UniProtKB-UniRule"/>
</dbReference>
<dbReference type="HAMAP" id="MF_00255">
    <property type="entry name" value="Gly_tRNA_synth_beta"/>
    <property type="match status" value="1"/>
</dbReference>
<dbReference type="InterPro" id="IPR008909">
    <property type="entry name" value="DALR_anticod-bd"/>
</dbReference>
<dbReference type="InterPro" id="IPR015944">
    <property type="entry name" value="Gly-tRNA-synth_bsu"/>
</dbReference>
<dbReference type="InterPro" id="IPR006194">
    <property type="entry name" value="Gly-tRNA-synth_heterodimer"/>
</dbReference>
<dbReference type="NCBIfam" id="TIGR00211">
    <property type="entry name" value="glyS"/>
    <property type="match status" value="1"/>
</dbReference>
<dbReference type="PANTHER" id="PTHR30075:SF2">
    <property type="entry name" value="GLYCINE--TRNA LIGASE, CHLOROPLASTIC_MITOCHONDRIAL 2"/>
    <property type="match status" value="1"/>
</dbReference>
<dbReference type="PANTHER" id="PTHR30075">
    <property type="entry name" value="GLYCYL-TRNA SYNTHETASE"/>
    <property type="match status" value="1"/>
</dbReference>
<dbReference type="Pfam" id="PF05746">
    <property type="entry name" value="DALR_1"/>
    <property type="match status" value="1"/>
</dbReference>
<dbReference type="Pfam" id="PF02092">
    <property type="entry name" value="tRNA_synt_2f"/>
    <property type="match status" value="1"/>
</dbReference>
<dbReference type="PRINTS" id="PR01045">
    <property type="entry name" value="TRNASYNTHGB"/>
</dbReference>
<dbReference type="SUPFAM" id="SSF109604">
    <property type="entry name" value="HD-domain/PDEase-like"/>
    <property type="match status" value="1"/>
</dbReference>
<dbReference type="PROSITE" id="PS50861">
    <property type="entry name" value="AA_TRNA_LIGASE_II_GLYAB"/>
    <property type="match status" value="1"/>
</dbReference>
<protein>
    <recommendedName>
        <fullName evidence="1">Glycine--tRNA ligase beta subunit</fullName>
        <ecNumber evidence="1">6.1.1.14</ecNumber>
    </recommendedName>
    <alternativeName>
        <fullName evidence="1">Glycyl-tRNA synthetase beta subunit</fullName>
        <shortName evidence="1">GlyRS</shortName>
    </alternativeName>
</protein>
<comment type="catalytic activity">
    <reaction evidence="1">
        <text>tRNA(Gly) + glycine + ATP = glycyl-tRNA(Gly) + AMP + diphosphate</text>
        <dbReference type="Rhea" id="RHEA:16013"/>
        <dbReference type="Rhea" id="RHEA-COMP:9664"/>
        <dbReference type="Rhea" id="RHEA-COMP:9683"/>
        <dbReference type="ChEBI" id="CHEBI:30616"/>
        <dbReference type="ChEBI" id="CHEBI:33019"/>
        <dbReference type="ChEBI" id="CHEBI:57305"/>
        <dbReference type="ChEBI" id="CHEBI:78442"/>
        <dbReference type="ChEBI" id="CHEBI:78522"/>
        <dbReference type="ChEBI" id="CHEBI:456215"/>
        <dbReference type="EC" id="6.1.1.14"/>
    </reaction>
</comment>
<comment type="subunit">
    <text evidence="1">Tetramer of two alpha and two beta subunits.</text>
</comment>
<comment type="subcellular location">
    <subcellularLocation>
        <location evidence="1">Cytoplasm</location>
    </subcellularLocation>
</comment>
<comment type="similarity">
    <text evidence="1">Belongs to the class-II aminoacyl-tRNA synthetase family.</text>
</comment>
<gene>
    <name evidence="1" type="primary">glyS</name>
    <name type="ordered locus">SPP_1495</name>
</gene>
<proteinExistence type="inferred from homology"/>